<gene>
    <name evidence="1" type="primary">scpB</name>
    <name type="ordered locus">SP70585_1930</name>
</gene>
<accession>C1C9E1</accession>
<dbReference type="EMBL" id="CP000918">
    <property type="protein sequence ID" value="ACO17725.1"/>
    <property type="molecule type" value="Genomic_DNA"/>
</dbReference>
<dbReference type="RefSeq" id="WP_000105310.1">
    <property type="nucleotide sequence ID" value="NC_012468.1"/>
</dbReference>
<dbReference type="SMR" id="C1C9E1"/>
<dbReference type="GeneID" id="45219111"/>
<dbReference type="KEGG" id="snm:SP70585_1930"/>
<dbReference type="HOGENOM" id="CLU_045647_5_3_9"/>
<dbReference type="Proteomes" id="UP000002211">
    <property type="component" value="Chromosome"/>
</dbReference>
<dbReference type="GO" id="GO:0005737">
    <property type="term" value="C:cytoplasm"/>
    <property type="evidence" value="ECO:0007669"/>
    <property type="project" value="UniProtKB-SubCell"/>
</dbReference>
<dbReference type="GO" id="GO:0051301">
    <property type="term" value="P:cell division"/>
    <property type="evidence" value="ECO:0007669"/>
    <property type="project" value="UniProtKB-KW"/>
</dbReference>
<dbReference type="GO" id="GO:0051304">
    <property type="term" value="P:chromosome separation"/>
    <property type="evidence" value="ECO:0007669"/>
    <property type="project" value="InterPro"/>
</dbReference>
<dbReference type="GO" id="GO:0006260">
    <property type="term" value="P:DNA replication"/>
    <property type="evidence" value="ECO:0007669"/>
    <property type="project" value="UniProtKB-UniRule"/>
</dbReference>
<dbReference type="FunFam" id="1.10.10.10:FF:000507">
    <property type="entry name" value="Segregation and condensation protein B"/>
    <property type="match status" value="1"/>
</dbReference>
<dbReference type="FunFam" id="1.10.10.10:FF:000508">
    <property type="entry name" value="Segregation and condensation protein B"/>
    <property type="match status" value="1"/>
</dbReference>
<dbReference type="Gene3D" id="1.10.10.10">
    <property type="entry name" value="Winged helix-like DNA-binding domain superfamily/Winged helix DNA-binding domain"/>
    <property type="match status" value="2"/>
</dbReference>
<dbReference type="HAMAP" id="MF_01804">
    <property type="entry name" value="ScpB"/>
    <property type="match status" value="1"/>
</dbReference>
<dbReference type="InterPro" id="IPR005234">
    <property type="entry name" value="ScpB_csome_segregation"/>
</dbReference>
<dbReference type="InterPro" id="IPR036388">
    <property type="entry name" value="WH-like_DNA-bd_sf"/>
</dbReference>
<dbReference type="InterPro" id="IPR036390">
    <property type="entry name" value="WH_DNA-bd_sf"/>
</dbReference>
<dbReference type="NCBIfam" id="TIGR00281">
    <property type="entry name" value="SMC-Scp complex subunit ScpB"/>
    <property type="match status" value="1"/>
</dbReference>
<dbReference type="PANTHER" id="PTHR34298">
    <property type="entry name" value="SEGREGATION AND CONDENSATION PROTEIN B"/>
    <property type="match status" value="1"/>
</dbReference>
<dbReference type="PANTHER" id="PTHR34298:SF2">
    <property type="entry name" value="SEGREGATION AND CONDENSATION PROTEIN B"/>
    <property type="match status" value="1"/>
</dbReference>
<dbReference type="Pfam" id="PF04079">
    <property type="entry name" value="SMC_ScpB"/>
    <property type="match status" value="1"/>
</dbReference>
<dbReference type="PIRSF" id="PIRSF019345">
    <property type="entry name" value="ScpB"/>
    <property type="match status" value="1"/>
</dbReference>
<dbReference type="SUPFAM" id="SSF46785">
    <property type="entry name" value="Winged helix' DNA-binding domain"/>
    <property type="match status" value="2"/>
</dbReference>
<reference key="1">
    <citation type="journal article" date="2010" name="Genome Biol.">
        <title>Structure and dynamics of the pan-genome of Streptococcus pneumoniae and closely related species.</title>
        <authorList>
            <person name="Donati C."/>
            <person name="Hiller N.L."/>
            <person name="Tettelin H."/>
            <person name="Muzzi A."/>
            <person name="Croucher N.J."/>
            <person name="Angiuoli S.V."/>
            <person name="Oggioni M."/>
            <person name="Dunning Hotopp J.C."/>
            <person name="Hu F.Z."/>
            <person name="Riley D.R."/>
            <person name="Covacci A."/>
            <person name="Mitchell T.J."/>
            <person name="Bentley S.D."/>
            <person name="Kilian M."/>
            <person name="Ehrlich G.D."/>
            <person name="Rappuoli R."/>
            <person name="Moxon E.R."/>
            <person name="Masignani V."/>
        </authorList>
    </citation>
    <scope>NUCLEOTIDE SEQUENCE [LARGE SCALE GENOMIC DNA]</scope>
    <source>
        <strain>70585</strain>
    </source>
</reference>
<evidence type="ECO:0000255" key="1">
    <source>
        <dbReference type="HAMAP-Rule" id="MF_01804"/>
    </source>
</evidence>
<sequence>MSTLAKIEALLFVAGEDGIRVRQLAELLSLPPTGIQQSLGKLAQKYEKDPDSSLALIETSGAYRLVTKPQFAEILKEYSKAPINQSLSRAALETLSIIAYKQPITRIEIDAIRGVNSSGALAKLQAFDLIKEDGKKEVLGRPNLYVTTDYFLDYMGINHLEELPVIDELEIQAQESQLFGERIEEDENQ</sequence>
<organism>
    <name type="scientific">Streptococcus pneumoniae (strain 70585)</name>
    <dbReference type="NCBI Taxonomy" id="488221"/>
    <lineage>
        <taxon>Bacteria</taxon>
        <taxon>Bacillati</taxon>
        <taxon>Bacillota</taxon>
        <taxon>Bacilli</taxon>
        <taxon>Lactobacillales</taxon>
        <taxon>Streptococcaceae</taxon>
        <taxon>Streptococcus</taxon>
    </lineage>
</organism>
<keyword id="KW-0131">Cell cycle</keyword>
<keyword id="KW-0132">Cell division</keyword>
<keyword id="KW-0159">Chromosome partition</keyword>
<keyword id="KW-0963">Cytoplasm</keyword>
<comment type="function">
    <text evidence="1">Participates in chromosomal partition during cell division. May act via the formation of a condensin-like complex containing Smc and ScpA that pull DNA away from mid-cell into both cell halves.</text>
</comment>
<comment type="subunit">
    <text evidence="1">Homodimer. Homodimerization may be required to stabilize the binding of ScpA to the Smc head domains. Component of a cohesin-like complex composed of ScpA, ScpB and the Smc homodimer, in which ScpA and ScpB bind to the head domain of Smc. The presence of the three proteins is required for the association of the complex with DNA.</text>
</comment>
<comment type="subcellular location">
    <subcellularLocation>
        <location evidence="1">Cytoplasm</location>
    </subcellularLocation>
    <text evidence="1">Associated with two foci at the outer edges of the nucleoid region in young cells, and at four foci within both cell halves in older cells.</text>
</comment>
<comment type="similarity">
    <text evidence="1">Belongs to the ScpB family.</text>
</comment>
<feature type="chain" id="PRO_1000187541" description="Segregation and condensation protein B">
    <location>
        <begin position="1"/>
        <end position="189"/>
    </location>
</feature>
<protein>
    <recommendedName>
        <fullName evidence="1">Segregation and condensation protein B</fullName>
    </recommendedName>
</protein>
<proteinExistence type="inferred from homology"/>
<name>SCPB_STRP7</name>